<sequence>MKTMRKITAIIRREKLEDVKDALELMGIHGMTVSDVKGRGQQMGIRESYRGMDYCVDLLPKVQLEIVVDSEDLERTVEAISENARTGDVGDGKIFVTDVIDVVRIRTGEHGRDAI</sequence>
<dbReference type="EMBL" id="AE000666">
    <property type="protein sequence ID" value="AAB85167.1"/>
    <property type="molecule type" value="Genomic_DNA"/>
</dbReference>
<dbReference type="PIR" id="B69188">
    <property type="entry name" value="B69188"/>
</dbReference>
<dbReference type="SMR" id="O26758"/>
<dbReference type="FunCoup" id="O26758">
    <property type="interactions" value="40"/>
</dbReference>
<dbReference type="STRING" id="187420.MTH_662"/>
<dbReference type="PaxDb" id="187420-MTH_662"/>
<dbReference type="EnsemblBacteria" id="AAB85167">
    <property type="protein sequence ID" value="AAB85167"/>
    <property type="gene ID" value="MTH_662"/>
</dbReference>
<dbReference type="KEGG" id="mth:MTH_662"/>
<dbReference type="PATRIC" id="fig|187420.15.peg.643"/>
<dbReference type="HOGENOM" id="CLU_082268_0_0_2"/>
<dbReference type="InParanoid" id="O26758"/>
<dbReference type="Proteomes" id="UP000005223">
    <property type="component" value="Chromosome"/>
</dbReference>
<dbReference type="GO" id="GO:0005829">
    <property type="term" value="C:cytosol"/>
    <property type="evidence" value="ECO:0007669"/>
    <property type="project" value="TreeGrafter"/>
</dbReference>
<dbReference type="GO" id="GO:0005524">
    <property type="term" value="F:ATP binding"/>
    <property type="evidence" value="ECO:0007669"/>
    <property type="project" value="TreeGrafter"/>
</dbReference>
<dbReference type="GO" id="GO:0030234">
    <property type="term" value="F:enzyme regulator activity"/>
    <property type="evidence" value="ECO:0007669"/>
    <property type="project" value="InterPro"/>
</dbReference>
<dbReference type="GO" id="GO:0009399">
    <property type="term" value="P:nitrogen fixation"/>
    <property type="evidence" value="ECO:0007669"/>
    <property type="project" value="UniProtKB-KW"/>
</dbReference>
<dbReference type="GO" id="GO:0006808">
    <property type="term" value="P:regulation of nitrogen utilization"/>
    <property type="evidence" value="ECO:0007669"/>
    <property type="project" value="InterPro"/>
</dbReference>
<dbReference type="Gene3D" id="3.30.70.120">
    <property type="match status" value="1"/>
</dbReference>
<dbReference type="InterPro" id="IPR002187">
    <property type="entry name" value="N-reg_PII"/>
</dbReference>
<dbReference type="InterPro" id="IPR011322">
    <property type="entry name" value="N-reg_PII-like_a/b"/>
</dbReference>
<dbReference type="InterPro" id="IPR015867">
    <property type="entry name" value="N-reg_PII/ATP_PRibTrfase_C"/>
</dbReference>
<dbReference type="InterPro" id="IPR017918">
    <property type="entry name" value="N-reg_PII_CS"/>
</dbReference>
<dbReference type="PANTHER" id="PTHR30115">
    <property type="entry name" value="NITROGEN REGULATORY PROTEIN P-II"/>
    <property type="match status" value="1"/>
</dbReference>
<dbReference type="PANTHER" id="PTHR30115:SF11">
    <property type="entry name" value="NITROGEN REGULATORY PROTEIN P-II HOMOLOG"/>
    <property type="match status" value="1"/>
</dbReference>
<dbReference type="Pfam" id="PF00543">
    <property type="entry name" value="P-II"/>
    <property type="match status" value="1"/>
</dbReference>
<dbReference type="PRINTS" id="PR00340">
    <property type="entry name" value="PIIGLNB"/>
</dbReference>
<dbReference type="SMART" id="SM00938">
    <property type="entry name" value="P-II"/>
    <property type="match status" value="1"/>
</dbReference>
<dbReference type="SUPFAM" id="SSF54913">
    <property type="entry name" value="GlnB-like"/>
    <property type="match status" value="1"/>
</dbReference>
<dbReference type="PROSITE" id="PS00638">
    <property type="entry name" value="PII_GLNB_CTER"/>
    <property type="match status" value="1"/>
</dbReference>
<dbReference type="PROSITE" id="PS51343">
    <property type="entry name" value="PII_GLNB_DOM"/>
    <property type="match status" value="1"/>
</dbReference>
<evidence type="ECO:0000255" key="1">
    <source>
        <dbReference type="PROSITE-ProRule" id="PRU00675"/>
    </source>
</evidence>
<name>GLNB1_METTH</name>
<proteinExistence type="inferred from homology"/>
<reference key="1">
    <citation type="journal article" date="1997" name="J. Bacteriol.">
        <title>Complete genome sequence of Methanobacterium thermoautotrophicum deltaH: functional analysis and comparative genomics.</title>
        <authorList>
            <person name="Smith D.R."/>
            <person name="Doucette-Stamm L.A."/>
            <person name="Deloughery C."/>
            <person name="Lee H.-M."/>
            <person name="Dubois J."/>
            <person name="Aldredge T."/>
            <person name="Bashirzadeh R."/>
            <person name="Blakely D."/>
            <person name="Cook R."/>
            <person name="Gilbert K."/>
            <person name="Harrison D."/>
            <person name="Hoang L."/>
            <person name="Keagle P."/>
            <person name="Lumm W."/>
            <person name="Pothier B."/>
            <person name="Qiu D."/>
            <person name="Spadafora R."/>
            <person name="Vicare R."/>
            <person name="Wang Y."/>
            <person name="Wierzbowski J."/>
            <person name="Gibson R."/>
            <person name="Jiwani N."/>
            <person name="Caruso A."/>
            <person name="Bush D."/>
            <person name="Safer H."/>
            <person name="Patwell D."/>
            <person name="Prabhakar S."/>
            <person name="McDougall S."/>
            <person name="Shimer G."/>
            <person name="Goyal A."/>
            <person name="Pietrovski S."/>
            <person name="Church G.M."/>
            <person name="Daniels C.J."/>
            <person name="Mao J.-I."/>
            <person name="Rice P."/>
            <person name="Noelling J."/>
            <person name="Reeve J.N."/>
        </authorList>
    </citation>
    <scope>NUCLEOTIDE SEQUENCE [LARGE SCALE GENOMIC DNA]</scope>
    <source>
        <strain>ATCC 29096 / DSM 1053 / JCM 10044 / NBRC 100330 / Delta H</strain>
    </source>
</reference>
<gene>
    <name type="ordered locus">MTH_662</name>
</gene>
<accession>O26758</accession>
<organism>
    <name type="scientific">Methanothermobacter thermautotrophicus (strain ATCC 29096 / DSM 1053 / JCM 10044 / NBRC 100330 / Delta H)</name>
    <name type="common">Methanobacterium thermoautotrophicum</name>
    <dbReference type="NCBI Taxonomy" id="187420"/>
    <lineage>
        <taxon>Archaea</taxon>
        <taxon>Methanobacteriati</taxon>
        <taxon>Methanobacteriota</taxon>
        <taxon>Methanomada group</taxon>
        <taxon>Methanobacteria</taxon>
        <taxon>Methanobacteriales</taxon>
        <taxon>Methanobacteriaceae</taxon>
        <taxon>Methanothermobacter</taxon>
    </lineage>
</organism>
<keyword id="KW-0535">Nitrogen fixation</keyword>
<keyword id="KW-0547">Nucleotide-binding</keyword>
<keyword id="KW-0597">Phosphoprotein</keyword>
<keyword id="KW-1185">Reference proteome</keyword>
<keyword id="KW-0804">Transcription</keyword>
<keyword id="KW-0805">Transcription regulation</keyword>
<feature type="chain" id="PRO_0000139808" description="Nitrogen regulatory protein P-II 1">
    <location>
        <begin position="1"/>
        <end position="115"/>
    </location>
</feature>
<feature type="modified residue" description="O-UMP-tyrosine" evidence="1">
    <location>
        <position position="54"/>
    </location>
</feature>
<comment type="function">
    <text>Could be involved in the regulation of nitrogen fixation.</text>
</comment>
<comment type="similarity">
    <text evidence="1">Belongs to the P(II) protein family.</text>
</comment>
<protein>
    <recommendedName>
        <fullName>Nitrogen regulatory protein P-II 1</fullName>
    </recommendedName>
</protein>